<gene>
    <name type="primary">uspF</name>
    <name type="ordered locus">c1821</name>
</gene>
<sequence length="144" mass="15958">MNRTILVPIDISDSELTQRVISHVEAEAKIDDAEVHFLTVIPSLPYYASLGLAYSAELPAMDDLKAEAKSQLEEIIKKFKLPTDRVHVHVEEGSPKDRILELAKKIPAHMIIIASHRPDITTYLLGSNAAAVVRHAECSVLVVR</sequence>
<proteinExistence type="inferred from homology"/>
<accession>P0A4P6</accession>
<accession>Q7UCM9</accession>
<accession>Q83R76</accession>
<accession>Q8FHP3</accession>
<accession>Q8GC60</accession>
<accession>Q8X9P8</accession>
<comment type="subunit">
    <text evidence="1">Homodimer.</text>
</comment>
<comment type="similarity">
    <text evidence="2">Belongs to the universal stress protein A family.</text>
</comment>
<comment type="sequence caution" evidence="2">
    <conflict type="erroneous initiation">
        <sequence resource="EMBL-CDS" id="AAN80285"/>
    </conflict>
</comment>
<keyword id="KW-1185">Reference proteome</keyword>
<organism>
    <name type="scientific">Escherichia coli O6:H1 (strain CFT073 / ATCC 700928 / UPEC)</name>
    <dbReference type="NCBI Taxonomy" id="199310"/>
    <lineage>
        <taxon>Bacteria</taxon>
        <taxon>Pseudomonadati</taxon>
        <taxon>Pseudomonadota</taxon>
        <taxon>Gammaproteobacteria</taxon>
        <taxon>Enterobacterales</taxon>
        <taxon>Enterobacteriaceae</taxon>
        <taxon>Escherichia</taxon>
    </lineage>
</organism>
<dbReference type="EMBL" id="AE014075">
    <property type="protein sequence ID" value="AAN80285.1"/>
    <property type="status" value="ALT_INIT"/>
    <property type="molecule type" value="Genomic_DNA"/>
</dbReference>
<dbReference type="RefSeq" id="WP_001295593.1">
    <property type="nucleotide sequence ID" value="NZ_CP051263.1"/>
</dbReference>
<dbReference type="SMR" id="P0A4P6"/>
<dbReference type="STRING" id="199310.c1821"/>
<dbReference type="GeneID" id="93775539"/>
<dbReference type="KEGG" id="ecc:c1821"/>
<dbReference type="eggNOG" id="COG0589">
    <property type="taxonomic scope" value="Bacteria"/>
</dbReference>
<dbReference type="HOGENOM" id="CLU_049301_12_0_6"/>
<dbReference type="Proteomes" id="UP000001410">
    <property type="component" value="Chromosome"/>
</dbReference>
<dbReference type="CDD" id="cd00293">
    <property type="entry name" value="USP-like"/>
    <property type="match status" value="1"/>
</dbReference>
<dbReference type="FunFam" id="3.40.50.620:FF:000059">
    <property type="entry name" value="Universal stress protein F"/>
    <property type="match status" value="1"/>
</dbReference>
<dbReference type="Gene3D" id="3.40.50.620">
    <property type="entry name" value="HUPs"/>
    <property type="match status" value="1"/>
</dbReference>
<dbReference type="InterPro" id="IPR014729">
    <property type="entry name" value="Rossmann-like_a/b/a_fold"/>
</dbReference>
<dbReference type="InterPro" id="IPR006015">
    <property type="entry name" value="Universal_stress_UspA"/>
</dbReference>
<dbReference type="InterPro" id="IPR006016">
    <property type="entry name" value="UspA"/>
</dbReference>
<dbReference type="NCBIfam" id="NF011581">
    <property type="entry name" value="PRK15005.1"/>
    <property type="match status" value="1"/>
</dbReference>
<dbReference type="PANTHER" id="PTHR46268">
    <property type="entry name" value="STRESS RESPONSE PROTEIN NHAX"/>
    <property type="match status" value="1"/>
</dbReference>
<dbReference type="PANTHER" id="PTHR46268:SF18">
    <property type="entry name" value="UNIVERSAL STRESS PROTEIN F"/>
    <property type="match status" value="1"/>
</dbReference>
<dbReference type="Pfam" id="PF00582">
    <property type="entry name" value="Usp"/>
    <property type="match status" value="1"/>
</dbReference>
<dbReference type="PRINTS" id="PR01438">
    <property type="entry name" value="UNVRSLSTRESS"/>
</dbReference>
<dbReference type="SUPFAM" id="SSF52402">
    <property type="entry name" value="Adenine nucleotide alpha hydrolases-like"/>
    <property type="match status" value="1"/>
</dbReference>
<evidence type="ECO:0000250" key="1"/>
<evidence type="ECO:0000305" key="2"/>
<name>USPF_ECOL6</name>
<reference key="1">
    <citation type="journal article" date="2002" name="Proc. Natl. Acad. Sci. U.S.A.">
        <title>Extensive mosaic structure revealed by the complete genome sequence of uropathogenic Escherichia coli.</title>
        <authorList>
            <person name="Welch R.A."/>
            <person name="Burland V."/>
            <person name="Plunkett G. III"/>
            <person name="Redford P."/>
            <person name="Roesch P."/>
            <person name="Rasko D."/>
            <person name="Buckles E.L."/>
            <person name="Liou S.-R."/>
            <person name="Boutin A."/>
            <person name="Hackett J."/>
            <person name="Stroud D."/>
            <person name="Mayhew G.F."/>
            <person name="Rose D.J."/>
            <person name="Zhou S."/>
            <person name="Schwartz D.C."/>
            <person name="Perna N.T."/>
            <person name="Mobley H.L.T."/>
            <person name="Donnenberg M.S."/>
            <person name="Blattner F.R."/>
        </authorList>
    </citation>
    <scope>NUCLEOTIDE SEQUENCE [LARGE SCALE GENOMIC DNA]</scope>
    <source>
        <strain>CFT073 / ATCC 700928 / UPEC</strain>
    </source>
</reference>
<feature type="chain" id="PRO_0000147427" description="Universal stress protein F">
    <location>
        <begin position="1"/>
        <end position="144"/>
    </location>
</feature>
<protein>
    <recommendedName>
        <fullName>Universal stress protein F</fullName>
    </recommendedName>
</protein>